<sequence length="703" mass="76147">MADRRRQRASQDTEDEESGASGSDSGGSPARGGGSCSGSVGGGGSGSLPSQRGGRAGALHLRRVESGGAKSAEESECESEDGIEGDAVLSDYESAEDSEGDDGEYSEEENSKVELKSEANDAANSSAKDEKGEEKPDTKGTVTGERQSGDGQESTEPVENKVGKKGPKHLDDDEDRKNPAYIPRKGLFFEHDLRGQTQEEEVRPKGRQRKLWKDEGRWEHDKFREDEQAPKSRQELIALYGYDIRSAHNPDDIKPRRIRKPRFGSPPQRDPSWIGERPNKSHRHQGPGGTLPPRTFINRNAAGTGRMSAPRNYSRSGGFKEGRTGFRPAEAGGQHAGRSGETVKHETSYRSRHLEQTPVRDPSPEADAQVLGSPEKEEVAPEIPNPAPDTAPPVPDRPVEKKSYSRARRTRIKAGDAGKVAEEVPPPPEGLTPAPPVPEATPPTPAKTGNWEAPVDSTTGGLEQDVAQLNITEQNWSPGQPAFLQSRELRGMPNHIHMGAGPPPQFNRMEEMGVQGGRAKRYSSQRQRPVPEPPAPPVHISIMEGHYYDPLQFQGPIYTHGDSPAPLPPQGMIVQPEMHLPHPGLHPHQTPAPLPNPGLYPPPVSMSPGQPPPQQLLAPTYFSAPGVMNFGNPSYPYAPGALPPPPPPHLYPNTQAPSQVYGGVTYYNPAQQQVQPKPSPPRRTPQPVTIKPPPPEVVSRGSS</sequence>
<keyword id="KW-0013">ADP-ribosylation</keyword>
<keyword id="KW-0966">Cell projection</keyword>
<keyword id="KW-0175">Coiled coil</keyword>
<keyword id="KW-0963">Cytoplasm</keyword>
<keyword id="KW-0507">mRNA processing</keyword>
<keyword id="KW-0508">mRNA splicing</keyword>
<keyword id="KW-0509">mRNA transport</keyword>
<keyword id="KW-0866">Nonsense-mediated mRNA decay</keyword>
<keyword id="KW-0539">Nucleus</keyword>
<keyword id="KW-0597">Phosphoprotein</keyword>
<keyword id="KW-1185">Reference proteome</keyword>
<keyword id="KW-0694">RNA-binding</keyword>
<keyword id="KW-0747">Spliceosome</keyword>
<keyword id="KW-0346">Stress response</keyword>
<keyword id="KW-0810">Translation regulation</keyword>
<keyword id="KW-0813">Transport</keyword>
<keyword id="KW-0832">Ubl conjugation</keyword>
<gene>
    <name type="primary">CASC3</name>
    <name type="synonym">MLN51</name>
</gene>
<accession>A5D7H5</accession>
<protein>
    <recommendedName>
        <fullName>Protein CASC3</fullName>
    </recommendedName>
    <alternativeName>
        <fullName>Cancer susceptibility candidate gene 3 protein</fullName>
    </alternativeName>
    <alternativeName>
        <fullName>Metastatic lymph node gene 51 protein homolog</fullName>
        <shortName>MLN 51 homolog</shortName>
    </alternativeName>
    <alternativeName>
        <fullName>Protein barentsz</fullName>
        <shortName>Btz</shortName>
    </alternativeName>
</protein>
<name>CASC3_BOVIN</name>
<dbReference type="EMBL" id="BC140556">
    <property type="protein sequence ID" value="AAI40557.1"/>
    <property type="molecule type" value="mRNA"/>
</dbReference>
<dbReference type="RefSeq" id="NP_001091538.1">
    <property type="nucleotide sequence ID" value="NM_001098069.1"/>
</dbReference>
<dbReference type="RefSeq" id="XP_005220789.1">
    <property type="nucleotide sequence ID" value="XM_005220732.3"/>
</dbReference>
<dbReference type="RefSeq" id="XP_005220790.1">
    <property type="nucleotide sequence ID" value="XM_005220733.5"/>
</dbReference>
<dbReference type="RefSeq" id="XP_015314320.1">
    <property type="nucleotide sequence ID" value="XM_015458834.1"/>
</dbReference>
<dbReference type="RefSeq" id="XP_059734092.1">
    <property type="nucleotide sequence ID" value="XM_059878109.1"/>
</dbReference>
<dbReference type="FunCoup" id="A5D7H5">
    <property type="interactions" value="4445"/>
</dbReference>
<dbReference type="STRING" id="9913.ENSBTAP00000072025"/>
<dbReference type="PaxDb" id="9913-ENSBTAP00000008203"/>
<dbReference type="Ensembl" id="ENSBTAT00000079130.2">
    <property type="protein sequence ID" value="ENSBTAP00000072025.2"/>
    <property type="gene ID" value="ENSBTAG00000006250.6"/>
</dbReference>
<dbReference type="GeneID" id="531673"/>
<dbReference type="KEGG" id="bta:531673"/>
<dbReference type="CTD" id="22794"/>
<dbReference type="VEuPathDB" id="HostDB:ENSBTAG00000006250"/>
<dbReference type="VGNC" id="VGNC:54702">
    <property type="gene designation" value="CASC3"/>
</dbReference>
<dbReference type="eggNOG" id="KOG4264">
    <property type="taxonomic scope" value="Eukaryota"/>
</dbReference>
<dbReference type="GeneTree" id="ENSGT00390000006930"/>
<dbReference type="HOGENOM" id="CLU_018976_0_0_1"/>
<dbReference type="InParanoid" id="A5D7H5"/>
<dbReference type="OMA" id="NRMEEMS"/>
<dbReference type="OrthoDB" id="657902at2759"/>
<dbReference type="TreeFam" id="TF329663"/>
<dbReference type="Reactome" id="R-BTA-159236">
    <property type="pathway name" value="Transport of Mature mRNA derived from an Intron-Containing Transcript"/>
</dbReference>
<dbReference type="Reactome" id="R-BTA-72163">
    <property type="pathway name" value="mRNA Splicing - Major Pathway"/>
</dbReference>
<dbReference type="Reactome" id="R-BTA-72187">
    <property type="pathway name" value="mRNA 3'-end processing"/>
</dbReference>
<dbReference type="Reactome" id="R-BTA-73856">
    <property type="pathway name" value="RNA Polymerase II Transcription Termination"/>
</dbReference>
<dbReference type="Reactome" id="R-BTA-975957">
    <property type="pathway name" value="Nonsense Mediated Decay (NMD) enhanced by the Exon Junction Complex (EJC)"/>
</dbReference>
<dbReference type="Proteomes" id="UP000009136">
    <property type="component" value="Chromosome 19"/>
</dbReference>
<dbReference type="Bgee" id="ENSBTAG00000006250">
    <property type="expression patterns" value="Expressed in pigment epithelium of eye and 106 other cell types or tissues"/>
</dbReference>
<dbReference type="GO" id="GO:0010494">
    <property type="term" value="C:cytoplasmic stress granule"/>
    <property type="evidence" value="ECO:0007669"/>
    <property type="project" value="UniProtKB-SubCell"/>
</dbReference>
<dbReference type="GO" id="GO:0030425">
    <property type="term" value="C:dendrite"/>
    <property type="evidence" value="ECO:0007669"/>
    <property type="project" value="UniProtKB-SubCell"/>
</dbReference>
<dbReference type="GO" id="GO:0035145">
    <property type="term" value="C:exon-exon junction complex"/>
    <property type="evidence" value="ECO:0000318"/>
    <property type="project" value="GO_Central"/>
</dbReference>
<dbReference type="GO" id="GO:0031965">
    <property type="term" value="C:nuclear membrane"/>
    <property type="evidence" value="ECO:0007669"/>
    <property type="project" value="Ensembl"/>
</dbReference>
<dbReference type="GO" id="GO:0016607">
    <property type="term" value="C:nuclear speck"/>
    <property type="evidence" value="ECO:0007669"/>
    <property type="project" value="UniProtKB-SubCell"/>
</dbReference>
<dbReference type="GO" id="GO:0005634">
    <property type="term" value="C:nucleus"/>
    <property type="evidence" value="ECO:0000250"/>
    <property type="project" value="UniProtKB"/>
</dbReference>
<dbReference type="GO" id="GO:0048471">
    <property type="term" value="C:perinuclear region of cytoplasm"/>
    <property type="evidence" value="ECO:0007669"/>
    <property type="project" value="UniProtKB-SubCell"/>
</dbReference>
<dbReference type="GO" id="GO:0071006">
    <property type="term" value="C:U2-type catalytic step 1 spliceosome"/>
    <property type="evidence" value="ECO:0000250"/>
    <property type="project" value="UniProtKB"/>
</dbReference>
<dbReference type="GO" id="GO:0042802">
    <property type="term" value="F:identical protein binding"/>
    <property type="evidence" value="ECO:0007669"/>
    <property type="project" value="Ensembl"/>
</dbReference>
<dbReference type="GO" id="GO:0003729">
    <property type="term" value="F:mRNA binding"/>
    <property type="evidence" value="ECO:0007669"/>
    <property type="project" value="InterPro"/>
</dbReference>
<dbReference type="GO" id="GO:0031625">
    <property type="term" value="F:ubiquitin protein ligase binding"/>
    <property type="evidence" value="ECO:0007669"/>
    <property type="project" value="Ensembl"/>
</dbReference>
<dbReference type="GO" id="GO:0008298">
    <property type="term" value="P:intracellular mRNA localization"/>
    <property type="evidence" value="ECO:0007669"/>
    <property type="project" value="Ensembl"/>
</dbReference>
<dbReference type="GO" id="GO:0000398">
    <property type="term" value="P:mRNA splicing, via spliceosome"/>
    <property type="evidence" value="ECO:0000250"/>
    <property type="project" value="UniProtKB"/>
</dbReference>
<dbReference type="GO" id="GO:0051028">
    <property type="term" value="P:mRNA transport"/>
    <property type="evidence" value="ECO:0007669"/>
    <property type="project" value="UniProtKB-KW"/>
</dbReference>
<dbReference type="GO" id="GO:0000184">
    <property type="term" value="P:nuclear-transcribed mRNA catabolic process, nonsense-mediated decay"/>
    <property type="evidence" value="ECO:0007669"/>
    <property type="project" value="UniProtKB-KW"/>
</dbReference>
<dbReference type="GO" id="GO:2000622">
    <property type="term" value="P:regulation of nuclear-transcribed mRNA catabolic process, nonsense-mediated decay"/>
    <property type="evidence" value="ECO:0007669"/>
    <property type="project" value="Ensembl"/>
</dbReference>
<dbReference type="GO" id="GO:0006417">
    <property type="term" value="P:regulation of translation"/>
    <property type="evidence" value="ECO:0007669"/>
    <property type="project" value="UniProtKB-KW"/>
</dbReference>
<dbReference type="InterPro" id="IPR018545">
    <property type="entry name" value="Btz_dom"/>
</dbReference>
<dbReference type="InterPro" id="IPR028544">
    <property type="entry name" value="CASC3"/>
</dbReference>
<dbReference type="PANTHER" id="PTHR13434">
    <property type="entry name" value="PROTEIN CASC3"/>
    <property type="match status" value="1"/>
</dbReference>
<dbReference type="PANTHER" id="PTHR13434:SF0">
    <property type="entry name" value="PROTEIN CASC3"/>
    <property type="match status" value="1"/>
</dbReference>
<dbReference type="Pfam" id="PF09405">
    <property type="entry name" value="Btz"/>
    <property type="match status" value="1"/>
</dbReference>
<dbReference type="SMART" id="SM01044">
    <property type="entry name" value="Btz"/>
    <property type="match status" value="1"/>
</dbReference>
<evidence type="ECO:0000250" key="1"/>
<evidence type="ECO:0000250" key="2">
    <source>
        <dbReference type="UniProtKB" id="O15234"/>
    </source>
</evidence>
<evidence type="ECO:0000250" key="3">
    <source>
        <dbReference type="UniProtKB" id="Q8K3W3"/>
    </source>
</evidence>
<evidence type="ECO:0000250" key="4">
    <source>
        <dbReference type="UniProtKB" id="Q8K3X0"/>
    </source>
</evidence>
<evidence type="ECO:0000255" key="5"/>
<evidence type="ECO:0000256" key="6">
    <source>
        <dbReference type="SAM" id="MobiDB-lite"/>
    </source>
</evidence>
<evidence type="ECO:0000305" key="7"/>
<comment type="function">
    <text evidence="2">Required for pre-mRNA splicing as component of the spliceosome. Core component of the splicing-dependent multiprotein exon junction complex (EJC) deposited at splice junctions on mRNAs. The EJC is a dynamic structure consisting of core proteins and several peripheral nuclear and cytoplasmic associated factors that join the complex only transiently either during EJC assembly or during subsequent mRNA metabolism. The EJC marks the position of the exon-exon junction in the mature mRNA for the gene expression machinery and the core components remain bound to spliced mRNAs throughout all stages of mRNA metabolism thereby influencing downstream processes including nuclear mRNA export, subcellular mRNA localization, translation efficiency and nonsense-mediated mRNA decay (NMD). Stimulates the ATPase and RNA-helicase activities of EIF4A3. Plays a role in the stress response by participating in cytoplasmic stress granules assembly and by favoring cell recovery following stress. Component of the dendritic ribonucleoprotein particles (RNPs) in hippocampal neurons. May play a role in mRNA transport. Binds spliced mRNA in sequence-independent manner, 20-24 nucleotides upstream of mRNA exon-exon junctions. Binds poly(G) and poly(U) RNA homomer.</text>
</comment>
<comment type="subunit">
    <text evidence="2 4">Identified in the spliceosome C complex. Component of the mRNA splicing-dependent exon junction complex (EJC), which contains at least CASC3, EIF4A3, MAGOH, NXF1 and RBM8A/Y14. Identified in a complex composed of the EJC core, UPF3B and UPF2. The EJC core can also interact with UPF3A (in vitro) (By similarity). Forms homooligomers (By similarity). Interacts with STAU in an RNA-dependent manner (By similarity). Interacts with DHX34; the interaction is RNA-independent (By similarity).</text>
</comment>
<comment type="subcellular location">
    <subcellularLocation>
        <location evidence="2">Cytoplasm</location>
    </subcellularLocation>
    <subcellularLocation>
        <location evidence="3">Cytoplasm</location>
        <location evidence="3">Perinuclear region</location>
    </subcellularLocation>
    <subcellularLocation>
        <location evidence="2">Nucleus</location>
    </subcellularLocation>
    <subcellularLocation>
        <location evidence="2">Nucleus speckle</location>
    </subcellularLocation>
    <subcellularLocation>
        <location evidence="2">Cytoplasm</location>
        <location evidence="2">Stress granule</location>
    </subcellularLocation>
    <subcellularLocation>
        <location evidence="4">Cytoplasm</location>
        <location evidence="4">Cytoplasmic ribonucleoprotein granule</location>
    </subcellularLocation>
    <subcellularLocation>
        <location evidence="4">Cell projection</location>
        <location evidence="4">Dendrite</location>
    </subcellularLocation>
    <text evidence="2 4">Shuttles between the nucleus and the cytoplasm in a XPO1/CRM1-dependent manner. Transported to the cytoplasm as part of the exon junction complex (EJC) bound to mRNA. In nuclear speckles, colocalizes with MAGOH. Under stress conditions, colocalizes with FMR1 and TIA1, but not MAGOH and RBM8A EJC core factors, in cytoplasmic stress granules (By similarity). In the dendrites of hippocampal neurons, localizes to dendritic ribonucleoprotein granules (By similarity).</text>
</comment>
<comment type="domain">
    <text evidence="1">The coiled coil domain may be involved in oligomerization.</text>
</comment>
<comment type="PTM">
    <text evidence="1">Phosphorylated.</text>
</comment>
<comment type="PTM">
    <text evidence="1">ADP-ribosylated by tankyrase TNKS and TNKS2. Poly-ADP-ribosylated protein is recognized by RNF146, followed by ubiquitination (By similarity).</text>
</comment>
<comment type="PTM">
    <text evidence="1">Ubiquitinated by RNF146 when poly-ADP-ribosylated, leading to its degradation.</text>
</comment>
<comment type="similarity">
    <text evidence="7">Belongs to the CASC3 family.</text>
</comment>
<reference key="1">
    <citation type="submission" date="2007-04" db="EMBL/GenBank/DDBJ databases">
        <authorList>
            <consortium name="NIH - Mammalian Gene Collection (MGC) project"/>
        </authorList>
    </citation>
    <scope>NUCLEOTIDE SEQUENCE [LARGE SCALE MRNA]</scope>
    <source>
        <strain>Hereford</strain>
        <tissue>Fetal skin</tissue>
    </source>
</reference>
<organism>
    <name type="scientific">Bos taurus</name>
    <name type="common">Bovine</name>
    <dbReference type="NCBI Taxonomy" id="9913"/>
    <lineage>
        <taxon>Eukaryota</taxon>
        <taxon>Metazoa</taxon>
        <taxon>Chordata</taxon>
        <taxon>Craniata</taxon>
        <taxon>Vertebrata</taxon>
        <taxon>Euteleostomi</taxon>
        <taxon>Mammalia</taxon>
        <taxon>Eutheria</taxon>
        <taxon>Laurasiatheria</taxon>
        <taxon>Artiodactyla</taxon>
        <taxon>Ruminantia</taxon>
        <taxon>Pecora</taxon>
        <taxon>Bovidae</taxon>
        <taxon>Bovinae</taxon>
        <taxon>Bos</taxon>
    </lineage>
</organism>
<feature type="chain" id="PRO_0000378550" description="Protein CASC3">
    <location>
        <begin position="1"/>
        <end position="703"/>
    </location>
</feature>
<feature type="region of interest" description="Disordered" evidence="6">
    <location>
        <begin position="1"/>
        <end position="451"/>
    </location>
</feature>
<feature type="region of interest" description="Necessary for RNA-binding, interaction with MAGOH and localization in nucleus speckles" evidence="1">
    <location>
        <begin position="137"/>
        <end position="283"/>
    </location>
</feature>
<feature type="region of interest" description="Sufficient to form the EJC" evidence="1">
    <location>
        <begin position="137"/>
        <end position="283"/>
    </location>
</feature>
<feature type="region of interest" description="Necessary for localization in cytoplasmic stress granules" evidence="1">
    <location>
        <begin position="377"/>
        <end position="703"/>
    </location>
</feature>
<feature type="region of interest" description="Disordered" evidence="6">
    <location>
        <begin position="633"/>
        <end position="703"/>
    </location>
</feature>
<feature type="coiled-coil region" evidence="5">
    <location>
        <begin position="102"/>
        <end position="125"/>
    </location>
</feature>
<feature type="short sequence motif" description="Nuclear localization signal 1" evidence="5">
    <location>
        <begin position="204"/>
        <end position="210"/>
    </location>
</feature>
<feature type="short sequence motif" description="Nuclear localization signal 2" evidence="5">
    <location>
        <begin position="254"/>
        <end position="262"/>
    </location>
</feature>
<feature type="short sequence motif" description="Nuclear export signal" evidence="1">
    <location>
        <begin position="462"/>
        <end position="471"/>
    </location>
</feature>
<feature type="compositionally biased region" description="Low complexity" evidence="6">
    <location>
        <begin position="19"/>
        <end position="28"/>
    </location>
</feature>
<feature type="compositionally biased region" description="Gly residues" evidence="6">
    <location>
        <begin position="29"/>
        <end position="46"/>
    </location>
</feature>
<feature type="compositionally biased region" description="Low complexity" evidence="6">
    <location>
        <begin position="47"/>
        <end position="59"/>
    </location>
</feature>
<feature type="compositionally biased region" description="Acidic residues" evidence="6">
    <location>
        <begin position="74"/>
        <end position="84"/>
    </location>
</feature>
<feature type="compositionally biased region" description="Acidic residues" evidence="6">
    <location>
        <begin position="93"/>
        <end position="108"/>
    </location>
</feature>
<feature type="compositionally biased region" description="Basic and acidic residues" evidence="6">
    <location>
        <begin position="109"/>
        <end position="119"/>
    </location>
</feature>
<feature type="compositionally biased region" description="Basic and acidic residues" evidence="6">
    <location>
        <begin position="127"/>
        <end position="138"/>
    </location>
</feature>
<feature type="compositionally biased region" description="Polar residues" evidence="6">
    <location>
        <begin position="140"/>
        <end position="157"/>
    </location>
</feature>
<feature type="compositionally biased region" description="Basic and acidic residues" evidence="6">
    <location>
        <begin position="158"/>
        <end position="178"/>
    </location>
</feature>
<feature type="compositionally biased region" description="Basic and acidic residues" evidence="6">
    <location>
        <begin position="211"/>
        <end position="234"/>
    </location>
</feature>
<feature type="compositionally biased region" description="Basic and acidic residues" evidence="6">
    <location>
        <begin position="245"/>
        <end position="255"/>
    </location>
</feature>
<feature type="compositionally biased region" description="Basic and acidic residues" evidence="6">
    <location>
        <begin position="341"/>
        <end position="355"/>
    </location>
</feature>
<feature type="compositionally biased region" description="Pro residues" evidence="6">
    <location>
        <begin position="383"/>
        <end position="396"/>
    </location>
</feature>
<feature type="compositionally biased region" description="Basic and acidic residues" evidence="6">
    <location>
        <begin position="413"/>
        <end position="422"/>
    </location>
</feature>
<feature type="compositionally biased region" description="Pro residues" evidence="6">
    <location>
        <begin position="424"/>
        <end position="445"/>
    </location>
</feature>
<feature type="compositionally biased region" description="Pro residues" evidence="6">
    <location>
        <begin position="641"/>
        <end position="650"/>
    </location>
</feature>
<feature type="compositionally biased region" description="Pro residues" evidence="6">
    <location>
        <begin position="677"/>
        <end position="696"/>
    </location>
</feature>
<feature type="modified residue" description="Phosphoserine" evidence="3">
    <location>
        <position position="35"/>
    </location>
</feature>
<feature type="modified residue" description="Phosphoserine" evidence="2">
    <location>
        <position position="117"/>
    </location>
</feature>
<feature type="modified residue" description="Phosphoserine" evidence="2">
    <location>
        <position position="148"/>
    </location>
</feature>
<feature type="modified residue" description="Phosphoserine" evidence="2">
    <location>
        <position position="265"/>
    </location>
</feature>
<feature type="modified residue" description="Phosphothreonine" evidence="2">
    <location>
        <position position="357"/>
    </location>
</feature>
<feature type="modified residue" description="Phosphoserine" evidence="2">
    <location>
        <position position="363"/>
    </location>
</feature>
<feature type="modified residue" description="Phosphoserine" evidence="2">
    <location>
        <position position="373"/>
    </location>
</feature>
<feature type="modified residue" description="Phosphoserine" evidence="2">
    <location>
        <position position="477"/>
    </location>
</feature>
<proteinExistence type="evidence at transcript level"/>